<comment type="function">
    <text evidence="1">Catalyzes the ATP-dependent phosphorylation of N-acetyl-L-glutamate.</text>
</comment>
<comment type="catalytic activity">
    <reaction evidence="1">
        <text>N-acetyl-L-glutamate + ATP = N-acetyl-L-glutamyl 5-phosphate + ADP</text>
        <dbReference type="Rhea" id="RHEA:14629"/>
        <dbReference type="ChEBI" id="CHEBI:30616"/>
        <dbReference type="ChEBI" id="CHEBI:44337"/>
        <dbReference type="ChEBI" id="CHEBI:57936"/>
        <dbReference type="ChEBI" id="CHEBI:456216"/>
        <dbReference type="EC" id="2.7.2.8"/>
    </reaction>
</comment>
<comment type="pathway">
    <text evidence="1">Amino-acid biosynthesis; L-arginine biosynthesis; N(2)-acetyl-L-ornithine from L-glutamate: step 2/4.</text>
</comment>
<comment type="subcellular location">
    <subcellularLocation>
        <location evidence="1">Cytoplasm</location>
    </subcellularLocation>
</comment>
<comment type="similarity">
    <text evidence="1">Belongs to the acetylglutamate kinase family. ArgB subfamily.</text>
</comment>
<sequence length="297" mass="31549">MTDIAATAEMQAALLSRALPYMQRYEHKTVVVKYGGHAMGDIELGKAFARDIALLKQSGVNPIVVHGGGPQIGAMLTKMGIESKFEGGLRVTDQKTVEIVEMVLAGSINKEIVALINAEGEWAIGLCGKDGNMVFAEKARKTMIDPDSNIERVLDLGFVGEPVEVDRTLLDLLARSEMIPVLAPVAPGRDGHTYNINADTFAGAIAGACKASRLLFLTDVPGVLDKNKKLIDELTVAEAKALIKDGTVSGGMIPKVETCIEAIERGVEGVVILNGKTPHAVLLELFTEHGAGTLIVP</sequence>
<protein>
    <recommendedName>
        <fullName evidence="1">Acetylglutamate kinase</fullName>
        <ecNumber evidence="1">2.7.2.8</ecNumber>
    </recommendedName>
    <alternativeName>
        <fullName evidence="1">N-acetyl-L-glutamate 5-phosphotransferase</fullName>
    </alternativeName>
    <alternativeName>
        <fullName evidence="1">NAG kinase</fullName>
        <shortName evidence="1">NAGK</shortName>
    </alternativeName>
</protein>
<feature type="chain" id="PRO_0000112654" description="Acetylglutamate kinase">
    <location>
        <begin position="1"/>
        <end position="297"/>
    </location>
</feature>
<feature type="binding site" evidence="1">
    <location>
        <begin position="68"/>
        <end position="69"/>
    </location>
    <ligand>
        <name>substrate</name>
    </ligand>
</feature>
<feature type="binding site" evidence="1">
    <location>
        <position position="90"/>
    </location>
    <ligand>
        <name>substrate</name>
    </ligand>
</feature>
<feature type="binding site" evidence="1">
    <location>
        <position position="195"/>
    </location>
    <ligand>
        <name>substrate</name>
    </ligand>
</feature>
<feature type="site" description="Transition state stabilizer" evidence="1">
    <location>
        <position position="33"/>
    </location>
</feature>
<feature type="site" description="Transition state stabilizer" evidence="1">
    <location>
        <position position="255"/>
    </location>
</feature>
<reference key="1">
    <citation type="journal article" date="2000" name="DNA Res.">
        <title>Complete genome structure of the nitrogen-fixing symbiotic bacterium Mesorhizobium loti.</title>
        <authorList>
            <person name="Kaneko T."/>
            <person name="Nakamura Y."/>
            <person name="Sato S."/>
            <person name="Asamizu E."/>
            <person name="Kato T."/>
            <person name="Sasamoto S."/>
            <person name="Watanabe A."/>
            <person name="Idesawa K."/>
            <person name="Ishikawa A."/>
            <person name="Kawashima K."/>
            <person name="Kimura T."/>
            <person name="Kishida Y."/>
            <person name="Kiyokawa C."/>
            <person name="Kohara M."/>
            <person name="Matsumoto M."/>
            <person name="Matsuno A."/>
            <person name="Mochizuki Y."/>
            <person name="Nakayama S."/>
            <person name="Nakazaki N."/>
            <person name="Shimpo S."/>
            <person name="Sugimoto M."/>
            <person name="Takeuchi C."/>
            <person name="Yamada M."/>
            <person name="Tabata S."/>
        </authorList>
    </citation>
    <scope>NUCLEOTIDE SEQUENCE [LARGE SCALE GENOMIC DNA]</scope>
    <source>
        <strain>LMG 29417 / CECT 9101 / MAFF 303099</strain>
    </source>
</reference>
<organism>
    <name type="scientific">Mesorhizobium japonicum (strain LMG 29417 / CECT 9101 / MAFF 303099)</name>
    <name type="common">Mesorhizobium loti (strain MAFF 303099)</name>
    <dbReference type="NCBI Taxonomy" id="266835"/>
    <lineage>
        <taxon>Bacteria</taxon>
        <taxon>Pseudomonadati</taxon>
        <taxon>Pseudomonadota</taxon>
        <taxon>Alphaproteobacteria</taxon>
        <taxon>Hyphomicrobiales</taxon>
        <taxon>Phyllobacteriaceae</taxon>
        <taxon>Mesorhizobium</taxon>
    </lineage>
</organism>
<proteinExistence type="inferred from homology"/>
<dbReference type="EC" id="2.7.2.8" evidence="1"/>
<dbReference type="EMBL" id="BA000012">
    <property type="protein sequence ID" value="BAB51395.1"/>
    <property type="molecule type" value="Genomic_DNA"/>
</dbReference>
<dbReference type="RefSeq" id="WP_010912736.1">
    <property type="nucleotide sequence ID" value="NC_002678.2"/>
</dbReference>
<dbReference type="SMR" id="Q98D76"/>
<dbReference type="GeneID" id="66680903"/>
<dbReference type="KEGG" id="mlo:mlr4826"/>
<dbReference type="eggNOG" id="COG0548">
    <property type="taxonomic scope" value="Bacteria"/>
</dbReference>
<dbReference type="HOGENOM" id="CLU_053680_0_0_5"/>
<dbReference type="UniPathway" id="UPA00068">
    <property type="reaction ID" value="UER00107"/>
</dbReference>
<dbReference type="Proteomes" id="UP000000552">
    <property type="component" value="Chromosome"/>
</dbReference>
<dbReference type="GO" id="GO:0005737">
    <property type="term" value="C:cytoplasm"/>
    <property type="evidence" value="ECO:0007669"/>
    <property type="project" value="UniProtKB-SubCell"/>
</dbReference>
<dbReference type="GO" id="GO:0003991">
    <property type="term" value="F:acetylglutamate kinase activity"/>
    <property type="evidence" value="ECO:0007669"/>
    <property type="project" value="UniProtKB-UniRule"/>
</dbReference>
<dbReference type="GO" id="GO:0005524">
    <property type="term" value="F:ATP binding"/>
    <property type="evidence" value="ECO:0007669"/>
    <property type="project" value="UniProtKB-UniRule"/>
</dbReference>
<dbReference type="GO" id="GO:0042450">
    <property type="term" value="P:arginine biosynthetic process via ornithine"/>
    <property type="evidence" value="ECO:0007669"/>
    <property type="project" value="UniProtKB-UniRule"/>
</dbReference>
<dbReference type="GO" id="GO:0006526">
    <property type="term" value="P:L-arginine biosynthetic process"/>
    <property type="evidence" value="ECO:0007669"/>
    <property type="project" value="UniProtKB-UniPathway"/>
</dbReference>
<dbReference type="CDD" id="cd04250">
    <property type="entry name" value="AAK_NAGK-C"/>
    <property type="match status" value="1"/>
</dbReference>
<dbReference type="FunFam" id="3.40.1160.10:FF:000004">
    <property type="entry name" value="Acetylglutamate kinase"/>
    <property type="match status" value="1"/>
</dbReference>
<dbReference type="Gene3D" id="3.40.1160.10">
    <property type="entry name" value="Acetylglutamate kinase-like"/>
    <property type="match status" value="1"/>
</dbReference>
<dbReference type="HAMAP" id="MF_00082">
    <property type="entry name" value="ArgB"/>
    <property type="match status" value="1"/>
</dbReference>
<dbReference type="InterPro" id="IPR036393">
    <property type="entry name" value="AceGlu_kinase-like_sf"/>
</dbReference>
<dbReference type="InterPro" id="IPR004662">
    <property type="entry name" value="AcgluKinase_fam"/>
</dbReference>
<dbReference type="InterPro" id="IPR037528">
    <property type="entry name" value="ArgB"/>
</dbReference>
<dbReference type="InterPro" id="IPR001048">
    <property type="entry name" value="Asp/Glu/Uridylate_kinase"/>
</dbReference>
<dbReference type="InterPro" id="IPR001057">
    <property type="entry name" value="Glu/AcGlu_kinase"/>
</dbReference>
<dbReference type="InterPro" id="IPR041727">
    <property type="entry name" value="NAGK-C"/>
</dbReference>
<dbReference type="NCBIfam" id="TIGR00761">
    <property type="entry name" value="argB"/>
    <property type="match status" value="1"/>
</dbReference>
<dbReference type="PANTHER" id="PTHR23342">
    <property type="entry name" value="N-ACETYLGLUTAMATE SYNTHASE"/>
    <property type="match status" value="1"/>
</dbReference>
<dbReference type="PANTHER" id="PTHR23342:SF0">
    <property type="entry name" value="N-ACETYLGLUTAMATE SYNTHASE, MITOCHONDRIAL"/>
    <property type="match status" value="1"/>
</dbReference>
<dbReference type="Pfam" id="PF00696">
    <property type="entry name" value="AA_kinase"/>
    <property type="match status" value="1"/>
</dbReference>
<dbReference type="PIRSF" id="PIRSF000728">
    <property type="entry name" value="NAGK"/>
    <property type="match status" value="1"/>
</dbReference>
<dbReference type="PRINTS" id="PR00474">
    <property type="entry name" value="GLU5KINASE"/>
</dbReference>
<dbReference type="SUPFAM" id="SSF53633">
    <property type="entry name" value="Carbamate kinase-like"/>
    <property type="match status" value="1"/>
</dbReference>
<gene>
    <name evidence="1" type="primary">argB</name>
    <name type="ordered locus">mlr4826</name>
</gene>
<keyword id="KW-0028">Amino-acid biosynthesis</keyword>
<keyword id="KW-0055">Arginine biosynthesis</keyword>
<keyword id="KW-0067">ATP-binding</keyword>
<keyword id="KW-0963">Cytoplasm</keyword>
<keyword id="KW-0418">Kinase</keyword>
<keyword id="KW-0547">Nucleotide-binding</keyword>
<keyword id="KW-0808">Transferase</keyword>
<evidence type="ECO:0000255" key="1">
    <source>
        <dbReference type="HAMAP-Rule" id="MF_00082"/>
    </source>
</evidence>
<accession>Q98D76</accession>
<name>ARGB_RHILO</name>